<feature type="transit peptide" description="Mitochondrion" evidence="2">
    <location>
        <begin position="1"/>
        <end status="unknown"/>
    </location>
</feature>
<feature type="chain" id="PRO_0000030527" description="Large ribosomal subunit protein bL35m">
    <location>
        <begin status="unknown"/>
        <end position="158"/>
    </location>
</feature>
<organism>
    <name type="scientific">Caenorhabditis elegans</name>
    <dbReference type="NCBI Taxonomy" id="6239"/>
    <lineage>
        <taxon>Eukaryota</taxon>
        <taxon>Metazoa</taxon>
        <taxon>Ecdysozoa</taxon>
        <taxon>Nematoda</taxon>
        <taxon>Chromadorea</taxon>
        <taxon>Rhabditida</taxon>
        <taxon>Rhabditina</taxon>
        <taxon>Rhabditomorpha</taxon>
        <taxon>Rhabditoidea</taxon>
        <taxon>Rhabditidae</taxon>
        <taxon>Peloderinae</taxon>
        <taxon>Caenorhabditis</taxon>
    </lineage>
</organism>
<evidence type="ECO:0000250" key="1"/>
<evidence type="ECO:0000255" key="2"/>
<evidence type="ECO:0000305" key="3"/>
<comment type="subcellular location">
    <subcellularLocation>
        <location evidence="1">Mitochondrion</location>
    </subcellularLocation>
</comment>
<comment type="similarity">
    <text evidence="3">Belongs to the bacterial ribosomal protein bL35 family.</text>
</comment>
<name>RM35_CAEEL</name>
<accession>Q21454</accession>
<proteinExistence type="inferred from homology"/>
<keyword id="KW-0496">Mitochondrion</keyword>
<keyword id="KW-1185">Reference proteome</keyword>
<keyword id="KW-0687">Ribonucleoprotein</keyword>
<keyword id="KW-0689">Ribosomal protein</keyword>
<keyword id="KW-0809">Transit peptide</keyword>
<dbReference type="EMBL" id="Z46381">
    <property type="protein sequence ID" value="CAA86518.2"/>
    <property type="molecule type" value="Genomic_DNA"/>
</dbReference>
<dbReference type="PIR" id="T23657">
    <property type="entry name" value="T23657"/>
</dbReference>
<dbReference type="RefSeq" id="NP_497724.2">
    <property type="nucleotide sequence ID" value="NM_065323.8"/>
</dbReference>
<dbReference type="SMR" id="Q21454"/>
<dbReference type="BioGRID" id="52073">
    <property type="interactions" value="2"/>
</dbReference>
<dbReference type="FunCoup" id="Q21454">
    <property type="interactions" value="495"/>
</dbReference>
<dbReference type="STRING" id="6239.M01F1.6.1"/>
<dbReference type="PaxDb" id="6239-M01F1.6"/>
<dbReference type="PeptideAtlas" id="Q21454"/>
<dbReference type="EnsemblMetazoa" id="M01F1.6.1">
    <property type="protein sequence ID" value="M01F1.6.1"/>
    <property type="gene ID" value="WBGene00010812"/>
</dbReference>
<dbReference type="GeneID" id="187375"/>
<dbReference type="KEGG" id="cel:CELE_M01F1.6"/>
<dbReference type="UCSC" id="M01F1.6">
    <property type="organism name" value="c. elegans"/>
</dbReference>
<dbReference type="AGR" id="WB:WBGene00010812"/>
<dbReference type="CTD" id="187375"/>
<dbReference type="WormBase" id="M01F1.6">
    <property type="protein sequence ID" value="CE37982"/>
    <property type="gene ID" value="WBGene00010812"/>
    <property type="gene designation" value="mrpl-35"/>
</dbReference>
<dbReference type="eggNOG" id="KOG4316">
    <property type="taxonomic scope" value="Eukaryota"/>
</dbReference>
<dbReference type="GeneTree" id="ENSGT00390000007547"/>
<dbReference type="HOGENOM" id="CLU_1670944_0_0_1"/>
<dbReference type="InParanoid" id="Q21454"/>
<dbReference type="OMA" id="ARIPHWE"/>
<dbReference type="OrthoDB" id="5847109at2759"/>
<dbReference type="PhylomeDB" id="Q21454"/>
<dbReference type="Reactome" id="R-CEL-5389840">
    <property type="pathway name" value="Mitochondrial translation elongation"/>
</dbReference>
<dbReference type="Reactome" id="R-CEL-5419276">
    <property type="pathway name" value="Mitochondrial translation termination"/>
</dbReference>
<dbReference type="PRO" id="PR:Q21454"/>
<dbReference type="Proteomes" id="UP000001940">
    <property type="component" value="Chromosome III"/>
</dbReference>
<dbReference type="Bgee" id="WBGene00010812">
    <property type="expression patterns" value="Expressed in germ line (C elegans) and 4 other cell types or tissues"/>
</dbReference>
<dbReference type="GO" id="GO:0005739">
    <property type="term" value="C:mitochondrion"/>
    <property type="evidence" value="ECO:0000318"/>
    <property type="project" value="GO_Central"/>
</dbReference>
<dbReference type="GO" id="GO:1990904">
    <property type="term" value="C:ribonucleoprotein complex"/>
    <property type="evidence" value="ECO:0007669"/>
    <property type="project" value="UniProtKB-KW"/>
</dbReference>
<dbReference type="GO" id="GO:0005840">
    <property type="term" value="C:ribosome"/>
    <property type="evidence" value="ECO:0007669"/>
    <property type="project" value="UniProtKB-KW"/>
</dbReference>
<dbReference type="InterPro" id="IPR019338">
    <property type="entry name" value="Ribosomal_bL35m"/>
</dbReference>
<dbReference type="PANTHER" id="PTHR15909">
    <property type="entry name" value="39S RIBOSOMAL PROTEIN L35, MITOCHONDRIAL"/>
    <property type="match status" value="1"/>
</dbReference>
<dbReference type="PANTHER" id="PTHR15909:SF0">
    <property type="entry name" value="LARGE RIBOSOMAL SUBUNIT PROTEIN BL35M"/>
    <property type="match status" value="1"/>
</dbReference>
<gene>
    <name type="primary">mrpl-35</name>
    <name type="ORF">M01F1.6</name>
</gene>
<sequence length="158" mass="18698">MLGKTALSTLCASRQAPITLAARGIANIPAHEYHIRFDQKVGRKRPAQDVLDRFKRLNNGMWIHAHPGRHKLRYMKDETWQKTSLYYETCTKEQCEILDKLMTPYWLRPKHYPNDPYSAYNVRHNVTSPRVDDRGNFVRERKKVLMDDSTSKRFFKDC</sequence>
<protein>
    <recommendedName>
        <fullName evidence="3">Large ribosomal subunit protein bL35m</fullName>
    </recommendedName>
    <alternativeName>
        <fullName evidence="3">39S ribosomal protein L35, mitochondrial</fullName>
        <shortName>L35mt</shortName>
        <shortName>MRP-L35</shortName>
    </alternativeName>
</protein>
<reference key="1">
    <citation type="journal article" date="1998" name="Science">
        <title>Genome sequence of the nematode C. elegans: a platform for investigating biology.</title>
        <authorList>
            <consortium name="The C. elegans sequencing consortium"/>
        </authorList>
    </citation>
    <scope>NUCLEOTIDE SEQUENCE [LARGE SCALE GENOMIC DNA]</scope>
    <source>
        <strain>Bristol N2</strain>
    </source>
</reference>